<dbReference type="EMBL" id="L77117">
    <property type="protein sequence ID" value="AAB99315.1"/>
    <property type="molecule type" value="Genomic_DNA"/>
</dbReference>
<dbReference type="PIR" id="B64463">
    <property type="entry name" value="B64463"/>
</dbReference>
<dbReference type="RefSeq" id="WP_010870824.1">
    <property type="nucleotide sequence ID" value="NC_000909.1"/>
</dbReference>
<dbReference type="SMR" id="Q58703"/>
<dbReference type="STRING" id="243232.MJ_1307"/>
<dbReference type="PaxDb" id="243232-MJ_1307"/>
<dbReference type="EnsemblBacteria" id="AAB99315">
    <property type="protein sequence ID" value="AAB99315"/>
    <property type="gene ID" value="MJ_1307"/>
</dbReference>
<dbReference type="GeneID" id="1452209"/>
<dbReference type="KEGG" id="mja:MJ_1307"/>
<dbReference type="eggNOG" id="arCOG03079">
    <property type="taxonomic scope" value="Archaea"/>
</dbReference>
<dbReference type="HOGENOM" id="CLU_069132_3_0_2"/>
<dbReference type="InParanoid" id="Q58703"/>
<dbReference type="OrthoDB" id="19265at2157"/>
<dbReference type="PhylomeDB" id="Q58703"/>
<dbReference type="Proteomes" id="UP000000805">
    <property type="component" value="Chromosome"/>
</dbReference>
<dbReference type="GO" id="GO:0005886">
    <property type="term" value="C:plasma membrane"/>
    <property type="evidence" value="ECO:0007669"/>
    <property type="project" value="UniProtKB-SubCell"/>
</dbReference>
<dbReference type="InterPro" id="IPR050622">
    <property type="entry name" value="CPA3_antiporter_subunitB"/>
</dbReference>
<dbReference type="InterPro" id="IPR007182">
    <property type="entry name" value="MnhB"/>
</dbReference>
<dbReference type="NCBIfam" id="NF004924">
    <property type="entry name" value="PRK06281.1"/>
    <property type="match status" value="1"/>
</dbReference>
<dbReference type="NCBIfam" id="NF009229">
    <property type="entry name" value="PRK12579.1"/>
    <property type="match status" value="1"/>
</dbReference>
<dbReference type="PANTHER" id="PTHR33932">
    <property type="entry name" value="NA(+)/H(+) ANTIPORTER SUBUNIT B"/>
    <property type="match status" value="1"/>
</dbReference>
<dbReference type="PANTHER" id="PTHR33932:SF4">
    <property type="entry name" value="NA(+)_H(+) ANTIPORTER SUBUNIT B"/>
    <property type="match status" value="1"/>
</dbReference>
<dbReference type="Pfam" id="PF04039">
    <property type="entry name" value="MnhB"/>
    <property type="match status" value="1"/>
</dbReference>
<reference key="1">
    <citation type="journal article" date="1996" name="Science">
        <title>Complete genome sequence of the methanogenic archaeon, Methanococcus jannaschii.</title>
        <authorList>
            <person name="Bult C.J."/>
            <person name="White O."/>
            <person name="Olsen G.J."/>
            <person name="Zhou L."/>
            <person name="Fleischmann R.D."/>
            <person name="Sutton G.G."/>
            <person name="Blake J.A."/>
            <person name="FitzGerald L.M."/>
            <person name="Clayton R.A."/>
            <person name="Gocayne J.D."/>
            <person name="Kerlavage A.R."/>
            <person name="Dougherty B.A."/>
            <person name="Tomb J.-F."/>
            <person name="Adams M.D."/>
            <person name="Reich C.I."/>
            <person name="Overbeek R."/>
            <person name="Kirkness E.F."/>
            <person name="Weinstock K.G."/>
            <person name="Merrick J.M."/>
            <person name="Glodek A."/>
            <person name="Scott J.L."/>
            <person name="Geoghagen N.S.M."/>
            <person name="Weidman J.F."/>
            <person name="Fuhrmann J.L."/>
            <person name="Nguyen D."/>
            <person name="Utterback T.R."/>
            <person name="Kelley J.M."/>
            <person name="Peterson J.D."/>
            <person name="Sadow P.W."/>
            <person name="Hanna M.C."/>
            <person name="Cotton M.D."/>
            <person name="Roberts K.M."/>
            <person name="Hurst M.A."/>
            <person name="Kaine B.P."/>
            <person name="Borodovsky M."/>
            <person name="Klenk H.-P."/>
            <person name="Fraser C.M."/>
            <person name="Smith H.O."/>
            <person name="Woese C.R."/>
            <person name="Venter J.C."/>
        </authorList>
    </citation>
    <scope>NUCLEOTIDE SEQUENCE [LARGE SCALE GENOMIC DNA]</scope>
    <source>
        <strain>ATCC 43067 / DSM 2661 / JAL-1 / JCM 10045 / NBRC 100440</strain>
    </source>
</reference>
<keyword id="KW-1003">Cell membrane</keyword>
<keyword id="KW-0472">Membrane</keyword>
<keyword id="KW-1185">Reference proteome</keyword>
<keyword id="KW-0812">Transmembrane</keyword>
<keyword id="KW-1133">Transmembrane helix</keyword>
<sequence>MNSKRDLAVAISFFVFGASVLYSLAHMQISPGVNEVYLTHYIIPNYVCAVIFDWRAYDTLGECLVLVVAVMVSWIVFGKSLYDNTYLKELFHAPESDDYITLQGWGEYTPIIKFLAFPMSVLMVALGIITVLGGHITPGGGFQGGALIAAAFILSVIAFGSNSPLWFDHKFLEKLEALGALGYLLLGVAGMFIGGYYLFNFTEINGFTIFPAPKEIITAGIIPYLNIAVGLKVLAGLSTAAFLLSCEKVIIEKISKSEEKLE</sequence>
<evidence type="ECO:0000255" key="1"/>
<evidence type="ECO:0000305" key="2"/>
<proteinExistence type="predicted"/>
<accession>Q58703</accession>
<comment type="subcellular location">
    <subcellularLocation>
        <location evidence="2">Cell membrane</location>
        <topology evidence="2">Multi-pass membrane protein</topology>
    </subcellularLocation>
</comment>
<feature type="chain" id="PRO_0000107265" description="Uncharacterized protein MJ1307">
    <location>
        <begin position="1"/>
        <end position="262"/>
    </location>
</feature>
<feature type="transmembrane region" description="Helical" evidence="1">
    <location>
        <begin position="7"/>
        <end position="27"/>
    </location>
</feature>
<feature type="transmembrane region" description="Helical" evidence="1">
    <location>
        <begin position="58"/>
        <end position="78"/>
    </location>
</feature>
<feature type="transmembrane region" description="Helical" evidence="1">
    <location>
        <begin position="114"/>
        <end position="134"/>
    </location>
</feature>
<feature type="transmembrane region" description="Helical" evidence="1">
    <location>
        <begin position="140"/>
        <end position="160"/>
    </location>
</feature>
<feature type="transmembrane region" description="Helical" evidence="1">
    <location>
        <begin position="179"/>
        <end position="199"/>
    </location>
</feature>
<feature type="transmembrane region" description="Helical" evidence="1">
    <location>
        <begin position="216"/>
        <end position="236"/>
    </location>
</feature>
<gene>
    <name type="ordered locus">MJ1307</name>
</gene>
<name>Y1307_METJA</name>
<organism>
    <name type="scientific">Methanocaldococcus jannaschii (strain ATCC 43067 / DSM 2661 / JAL-1 / JCM 10045 / NBRC 100440)</name>
    <name type="common">Methanococcus jannaschii</name>
    <dbReference type="NCBI Taxonomy" id="243232"/>
    <lineage>
        <taxon>Archaea</taxon>
        <taxon>Methanobacteriati</taxon>
        <taxon>Methanobacteriota</taxon>
        <taxon>Methanomada group</taxon>
        <taxon>Methanococci</taxon>
        <taxon>Methanococcales</taxon>
        <taxon>Methanocaldococcaceae</taxon>
        <taxon>Methanocaldococcus</taxon>
    </lineage>
</organism>
<protein>
    <recommendedName>
        <fullName>Uncharacterized protein MJ1307</fullName>
    </recommendedName>
</protein>